<name>TOLB_DECAR</name>
<accession>Q478F2</accession>
<keyword id="KW-0131">Cell cycle</keyword>
<keyword id="KW-0132">Cell division</keyword>
<keyword id="KW-0574">Periplasm</keyword>
<keyword id="KW-0732">Signal</keyword>
<proteinExistence type="inferred from homology"/>
<organism>
    <name type="scientific">Dechloromonas aromatica (strain RCB)</name>
    <dbReference type="NCBI Taxonomy" id="159087"/>
    <lineage>
        <taxon>Bacteria</taxon>
        <taxon>Pseudomonadati</taxon>
        <taxon>Pseudomonadota</taxon>
        <taxon>Betaproteobacteria</taxon>
        <taxon>Rhodocyclales</taxon>
        <taxon>Azonexaceae</taxon>
        <taxon>Dechloromonas</taxon>
    </lineage>
</organism>
<reference key="1">
    <citation type="journal article" date="2009" name="BMC Genomics">
        <title>Metabolic analysis of the soil microbe Dechloromonas aromatica str. RCB: indications of a surprisingly complex life-style and cryptic anaerobic pathways for aromatic degradation.</title>
        <authorList>
            <person name="Salinero K.K."/>
            <person name="Keller K."/>
            <person name="Feil W.S."/>
            <person name="Feil H."/>
            <person name="Trong S."/>
            <person name="Di Bartolo G."/>
            <person name="Lapidus A."/>
        </authorList>
    </citation>
    <scope>NUCLEOTIDE SEQUENCE [LARGE SCALE GENOMIC DNA]</scope>
    <source>
        <strain>RCB</strain>
    </source>
</reference>
<comment type="function">
    <text evidence="1">Part of the Tol-Pal system, which plays a role in outer membrane invagination during cell division and is important for maintaining outer membrane integrity.</text>
</comment>
<comment type="subunit">
    <text evidence="1">The Tol-Pal system is composed of five core proteins: the inner membrane proteins TolA, TolQ and TolR, the periplasmic protein TolB and the outer membrane protein Pal. They form a network linking the inner and outer membranes and the peptidoglycan layer.</text>
</comment>
<comment type="subcellular location">
    <subcellularLocation>
        <location evidence="1">Periplasm</location>
    </subcellularLocation>
</comment>
<comment type="similarity">
    <text evidence="1">Belongs to the TolB family.</text>
</comment>
<comment type="sequence caution" evidence="2">
    <conflict type="erroneous initiation">
        <sequence resource="EMBL-CDS" id="AAZ48779"/>
    </conflict>
</comment>
<feature type="signal peptide" evidence="1">
    <location>
        <begin position="1"/>
        <end position="25"/>
    </location>
</feature>
<feature type="chain" id="PRO_0000259045" description="Tol-Pal system protein TolB" evidence="1">
    <location>
        <begin position="26"/>
        <end position="426"/>
    </location>
</feature>
<gene>
    <name evidence="1" type="primary">tolB</name>
    <name type="ordered locus">Daro_4053</name>
</gene>
<evidence type="ECO:0000255" key="1">
    <source>
        <dbReference type="HAMAP-Rule" id="MF_00671"/>
    </source>
</evidence>
<evidence type="ECO:0000305" key="2"/>
<dbReference type="EMBL" id="CP000089">
    <property type="protein sequence ID" value="AAZ48779.1"/>
    <property type="status" value="ALT_INIT"/>
    <property type="molecule type" value="Genomic_DNA"/>
</dbReference>
<dbReference type="SMR" id="Q478F2"/>
<dbReference type="STRING" id="159087.Daro_4053"/>
<dbReference type="KEGG" id="dar:Daro_4053"/>
<dbReference type="eggNOG" id="COG0823">
    <property type="taxonomic scope" value="Bacteria"/>
</dbReference>
<dbReference type="HOGENOM" id="CLU_047123_0_0_4"/>
<dbReference type="GO" id="GO:0042597">
    <property type="term" value="C:periplasmic space"/>
    <property type="evidence" value="ECO:0007669"/>
    <property type="project" value="UniProtKB-SubCell"/>
</dbReference>
<dbReference type="GO" id="GO:0051301">
    <property type="term" value="P:cell division"/>
    <property type="evidence" value="ECO:0007669"/>
    <property type="project" value="UniProtKB-UniRule"/>
</dbReference>
<dbReference type="GO" id="GO:0017038">
    <property type="term" value="P:protein import"/>
    <property type="evidence" value="ECO:0007669"/>
    <property type="project" value="InterPro"/>
</dbReference>
<dbReference type="Gene3D" id="2.120.10.30">
    <property type="entry name" value="TolB, C-terminal domain"/>
    <property type="match status" value="1"/>
</dbReference>
<dbReference type="Gene3D" id="3.40.50.10070">
    <property type="entry name" value="TolB, N-terminal domain"/>
    <property type="match status" value="1"/>
</dbReference>
<dbReference type="HAMAP" id="MF_00671">
    <property type="entry name" value="TolB"/>
    <property type="match status" value="1"/>
</dbReference>
<dbReference type="InterPro" id="IPR011042">
    <property type="entry name" value="6-blade_b-propeller_TolB-like"/>
</dbReference>
<dbReference type="InterPro" id="IPR011659">
    <property type="entry name" value="PD40"/>
</dbReference>
<dbReference type="InterPro" id="IPR014167">
    <property type="entry name" value="Tol-Pal_TolB"/>
</dbReference>
<dbReference type="InterPro" id="IPR007195">
    <property type="entry name" value="TolB_N"/>
</dbReference>
<dbReference type="NCBIfam" id="TIGR02800">
    <property type="entry name" value="propeller_TolB"/>
    <property type="match status" value="1"/>
</dbReference>
<dbReference type="PANTHER" id="PTHR36842:SF1">
    <property type="entry name" value="PROTEIN TOLB"/>
    <property type="match status" value="1"/>
</dbReference>
<dbReference type="PANTHER" id="PTHR36842">
    <property type="entry name" value="PROTEIN TOLB HOMOLOG"/>
    <property type="match status" value="1"/>
</dbReference>
<dbReference type="Pfam" id="PF07676">
    <property type="entry name" value="PD40"/>
    <property type="match status" value="4"/>
</dbReference>
<dbReference type="Pfam" id="PF04052">
    <property type="entry name" value="TolB_N"/>
    <property type="match status" value="1"/>
</dbReference>
<dbReference type="SUPFAM" id="SSF52964">
    <property type="entry name" value="TolB, N-terminal domain"/>
    <property type="match status" value="1"/>
</dbReference>
<dbReference type="SUPFAM" id="SSF69304">
    <property type="entry name" value="Tricorn protease N-terminal domain"/>
    <property type="match status" value="1"/>
</dbReference>
<sequence>MNAMSRISRRIFLALALSLAGLAQAQLSIEITGAGANRIPVTIVDFPGDPTAARVVTATVRADLERSGLFKLVDNGTAAFDENAPVNHAEWKGKGADALAAGSIARSTDGRMEARFRLYDTQKGVSLGGAAYVTNNSQLRAAGHRIADFIYEKLTGEKGVFSTRIAYVVKARGQFLLQIADSDGQNAATALSSTEPIISPVWSPDGGRLAYVSFEKKKPVIYVHTLASGQRHIVANFKGSNSAPAWSPDGRKLAVVLSKDGNSQIYSVNADGSGLQRITQSSGIDTEPRYSADGGTIYFTSDRGGSPQVYQVGASGGDAKRVTFEGSYNVSPRPAPDGKSLAFISRREGRFQLAVMDLASRQVQVVSDSNKDESPSFAPNSRMILIATEIGGRGVLSAVSSDGRIKQRLSVAAGDVREPAWGPYYQ</sequence>
<protein>
    <recommendedName>
        <fullName evidence="1">Tol-Pal system protein TolB</fullName>
    </recommendedName>
</protein>